<evidence type="ECO:0000255" key="1">
    <source>
        <dbReference type="HAMAP-Rule" id="MF_00116"/>
    </source>
</evidence>
<organism>
    <name type="scientific">Salmonella heidelberg (strain SL476)</name>
    <dbReference type="NCBI Taxonomy" id="454169"/>
    <lineage>
        <taxon>Bacteria</taxon>
        <taxon>Pseudomonadati</taxon>
        <taxon>Pseudomonadota</taxon>
        <taxon>Gammaproteobacteria</taxon>
        <taxon>Enterobacterales</taxon>
        <taxon>Enterobacteriaceae</taxon>
        <taxon>Salmonella</taxon>
    </lineage>
</organism>
<gene>
    <name evidence="1" type="primary">dut</name>
    <name type="ordered locus">SeHA_C4057</name>
</gene>
<feature type="chain" id="PRO_1000094990" description="Deoxyuridine 5'-triphosphate nucleotidohydrolase">
    <location>
        <begin position="1"/>
        <end position="152"/>
    </location>
</feature>
<feature type="binding site" evidence="1">
    <location>
        <begin position="71"/>
        <end position="73"/>
    </location>
    <ligand>
        <name>substrate</name>
    </ligand>
</feature>
<feature type="binding site" evidence="1">
    <location>
        <position position="84"/>
    </location>
    <ligand>
        <name>substrate</name>
    </ligand>
</feature>
<feature type="binding site" evidence="1">
    <location>
        <begin position="88"/>
        <end position="90"/>
    </location>
    <ligand>
        <name>substrate</name>
    </ligand>
</feature>
<feature type="binding site" evidence="1">
    <location>
        <position position="98"/>
    </location>
    <ligand>
        <name>substrate</name>
    </ligand>
</feature>
<proteinExistence type="inferred from homology"/>
<sequence length="152" mass="16168">MMKKIDVKILDPRVGQQFPLPTYATSGSAGLDLRACLDDAVELAPGATTLVPTGLAIHIADPSLAAVMLPRSGLGHKHGIVLGNLVGLIDSDYQGQLMVSIWNRGQDSFTIEPGERIAQMVFVPVVQAEFNLVEAFDATERGEGGFGHSGRK</sequence>
<comment type="function">
    <text evidence="1">This enzyme is involved in nucleotide metabolism: it produces dUMP, the immediate precursor of thymidine nucleotides and it decreases the intracellular concentration of dUTP so that uracil cannot be incorporated into DNA.</text>
</comment>
<comment type="catalytic activity">
    <reaction evidence="1">
        <text>dUTP + H2O = dUMP + diphosphate + H(+)</text>
        <dbReference type="Rhea" id="RHEA:10248"/>
        <dbReference type="ChEBI" id="CHEBI:15377"/>
        <dbReference type="ChEBI" id="CHEBI:15378"/>
        <dbReference type="ChEBI" id="CHEBI:33019"/>
        <dbReference type="ChEBI" id="CHEBI:61555"/>
        <dbReference type="ChEBI" id="CHEBI:246422"/>
        <dbReference type="EC" id="3.6.1.23"/>
    </reaction>
</comment>
<comment type="cofactor">
    <cofactor evidence="1">
        <name>Mg(2+)</name>
        <dbReference type="ChEBI" id="CHEBI:18420"/>
    </cofactor>
</comment>
<comment type="pathway">
    <text evidence="1">Pyrimidine metabolism; dUMP biosynthesis; dUMP from dCTP (dUTP route): step 2/2.</text>
</comment>
<comment type="similarity">
    <text evidence="1">Belongs to the dUTPase family.</text>
</comment>
<accession>B4T9C4</accession>
<reference key="1">
    <citation type="journal article" date="2011" name="J. Bacteriol.">
        <title>Comparative genomics of 28 Salmonella enterica isolates: evidence for CRISPR-mediated adaptive sublineage evolution.</title>
        <authorList>
            <person name="Fricke W.F."/>
            <person name="Mammel M.K."/>
            <person name="McDermott P.F."/>
            <person name="Tartera C."/>
            <person name="White D.G."/>
            <person name="Leclerc J.E."/>
            <person name="Ravel J."/>
            <person name="Cebula T.A."/>
        </authorList>
    </citation>
    <scope>NUCLEOTIDE SEQUENCE [LARGE SCALE GENOMIC DNA]</scope>
    <source>
        <strain>SL476</strain>
    </source>
</reference>
<dbReference type="EC" id="3.6.1.23" evidence="1"/>
<dbReference type="EMBL" id="CP001120">
    <property type="protein sequence ID" value="ACF68951.1"/>
    <property type="molecule type" value="Genomic_DNA"/>
</dbReference>
<dbReference type="RefSeq" id="WP_000976078.1">
    <property type="nucleotide sequence ID" value="NC_011083.1"/>
</dbReference>
<dbReference type="SMR" id="B4T9C4"/>
<dbReference type="KEGG" id="seh:SeHA_C4057"/>
<dbReference type="HOGENOM" id="CLU_068508_1_1_6"/>
<dbReference type="UniPathway" id="UPA00610">
    <property type="reaction ID" value="UER00666"/>
</dbReference>
<dbReference type="Proteomes" id="UP000001866">
    <property type="component" value="Chromosome"/>
</dbReference>
<dbReference type="GO" id="GO:0004170">
    <property type="term" value="F:dUTP diphosphatase activity"/>
    <property type="evidence" value="ECO:0007669"/>
    <property type="project" value="UniProtKB-UniRule"/>
</dbReference>
<dbReference type="GO" id="GO:0000287">
    <property type="term" value="F:magnesium ion binding"/>
    <property type="evidence" value="ECO:0007669"/>
    <property type="project" value="UniProtKB-UniRule"/>
</dbReference>
<dbReference type="GO" id="GO:0006226">
    <property type="term" value="P:dUMP biosynthetic process"/>
    <property type="evidence" value="ECO:0007669"/>
    <property type="project" value="UniProtKB-UniRule"/>
</dbReference>
<dbReference type="GO" id="GO:0046081">
    <property type="term" value="P:dUTP catabolic process"/>
    <property type="evidence" value="ECO:0007669"/>
    <property type="project" value="InterPro"/>
</dbReference>
<dbReference type="CDD" id="cd07557">
    <property type="entry name" value="trimeric_dUTPase"/>
    <property type="match status" value="1"/>
</dbReference>
<dbReference type="FunFam" id="2.70.40.10:FF:000002">
    <property type="entry name" value="dUTP diphosphatase"/>
    <property type="match status" value="1"/>
</dbReference>
<dbReference type="Gene3D" id="2.70.40.10">
    <property type="match status" value="1"/>
</dbReference>
<dbReference type="HAMAP" id="MF_00116">
    <property type="entry name" value="dUTPase_bact"/>
    <property type="match status" value="1"/>
</dbReference>
<dbReference type="InterPro" id="IPR008181">
    <property type="entry name" value="dUTPase"/>
</dbReference>
<dbReference type="InterPro" id="IPR029054">
    <property type="entry name" value="dUTPase-like"/>
</dbReference>
<dbReference type="InterPro" id="IPR036157">
    <property type="entry name" value="dUTPase-like_sf"/>
</dbReference>
<dbReference type="InterPro" id="IPR033704">
    <property type="entry name" value="dUTPase_trimeric"/>
</dbReference>
<dbReference type="NCBIfam" id="TIGR00576">
    <property type="entry name" value="dut"/>
    <property type="match status" value="1"/>
</dbReference>
<dbReference type="NCBIfam" id="NF001862">
    <property type="entry name" value="PRK00601.1"/>
    <property type="match status" value="1"/>
</dbReference>
<dbReference type="PANTHER" id="PTHR11241">
    <property type="entry name" value="DEOXYURIDINE 5'-TRIPHOSPHATE NUCLEOTIDOHYDROLASE"/>
    <property type="match status" value="1"/>
</dbReference>
<dbReference type="PANTHER" id="PTHR11241:SF0">
    <property type="entry name" value="DEOXYURIDINE 5'-TRIPHOSPHATE NUCLEOTIDOHYDROLASE"/>
    <property type="match status" value="1"/>
</dbReference>
<dbReference type="Pfam" id="PF00692">
    <property type="entry name" value="dUTPase"/>
    <property type="match status" value="1"/>
</dbReference>
<dbReference type="SUPFAM" id="SSF51283">
    <property type="entry name" value="dUTPase-like"/>
    <property type="match status" value="1"/>
</dbReference>
<name>DUT_SALHS</name>
<protein>
    <recommendedName>
        <fullName evidence="1">Deoxyuridine 5'-triphosphate nucleotidohydrolase</fullName>
        <shortName evidence="1">dUTPase</shortName>
        <ecNumber evidence="1">3.6.1.23</ecNumber>
    </recommendedName>
    <alternativeName>
        <fullName evidence="1">dUTP pyrophosphatase</fullName>
    </alternativeName>
</protein>
<keyword id="KW-0378">Hydrolase</keyword>
<keyword id="KW-0460">Magnesium</keyword>
<keyword id="KW-0479">Metal-binding</keyword>
<keyword id="KW-0546">Nucleotide metabolism</keyword>